<name>RS14Z_STREM</name>
<protein>
    <recommendedName>
        <fullName evidence="1">Small ribosomal subunit protein uS14B</fullName>
    </recommendedName>
    <alternativeName>
        <fullName evidence="2">30S ribosomal protein S14 type Z</fullName>
    </alternativeName>
</protein>
<organism>
    <name type="scientific">Streptococcus equi subsp. zooepidemicus (strain MGCS10565)</name>
    <dbReference type="NCBI Taxonomy" id="552526"/>
    <lineage>
        <taxon>Bacteria</taxon>
        <taxon>Bacillati</taxon>
        <taxon>Bacillota</taxon>
        <taxon>Bacilli</taxon>
        <taxon>Lactobacillales</taxon>
        <taxon>Streptococcaceae</taxon>
        <taxon>Streptococcus</taxon>
    </lineage>
</organism>
<accession>B4U513</accession>
<dbReference type="EMBL" id="CP001129">
    <property type="protein sequence ID" value="ACG61452.1"/>
    <property type="molecule type" value="Genomic_DNA"/>
</dbReference>
<dbReference type="RefSeq" id="WP_012514742.1">
    <property type="nucleotide sequence ID" value="NC_011134.1"/>
</dbReference>
<dbReference type="SMR" id="B4U513"/>
<dbReference type="KEGG" id="sez:Sez_0069"/>
<dbReference type="HOGENOM" id="CLU_139869_3_0_9"/>
<dbReference type="Proteomes" id="UP000001873">
    <property type="component" value="Chromosome"/>
</dbReference>
<dbReference type="GO" id="GO:0015935">
    <property type="term" value="C:small ribosomal subunit"/>
    <property type="evidence" value="ECO:0007669"/>
    <property type="project" value="TreeGrafter"/>
</dbReference>
<dbReference type="GO" id="GO:0019843">
    <property type="term" value="F:rRNA binding"/>
    <property type="evidence" value="ECO:0007669"/>
    <property type="project" value="UniProtKB-UniRule"/>
</dbReference>
<dbReference type="GO" id="GO:0003735">
    <property type="term" value="F:structural constituent of ribosome"/>
    <property type="evidence" value="ECO:0007669"/>
    <property type="project" value="InterPro"/>
</dbReference>
<dbReference type="GO" id="GO:0008270">
    <property type="term" value="F:zinc ion binding"/>
    <property type="evidence" value="ECO:0007669"/>
    <property type="project" value="UniProtKB-UniRule"/>
</dbReference>
<dbReference type="GO" id="GO:0006412">
    <property type="term" value="P:translation"/>
    <property type="evidence" value="ECO:0007669"/>
    <property type="project" value="UniProtKB-UniRule"/>
</dbReference>
<dbReference type="FunFam" id="4.10.830.10:FF:000001">
    <property type="entry name" value="30S ribosomal protein S14 type Z"/>
    <property type="match status" value="1"/>
</dbReference>
<dbReference type="Gene3D" id="4.10.830.10">
    <property type="entry name" value="30s Ribosomal Protein S14, Chain N"/>
    <property type="match status" value="1"/>
</dbReference>
<dbReference type="HAMAP" id="MF_01364_B">
    <property type="entry name" value="Ribosomal_uS14_2_B"/>
    <property type="match status" value="1"/>
</dbReference>
<dbReference type="InterPro" id="IPR001209">
    <property type="entry name" value="Ribosomal_uS14"/>
</dbReference>
<dbReference type="InterPro" id="IPR023053">
    <property type="entry name" value="Ribosomal_uS14_bact"/>
</dbReference>
<dbReference type="InterPro" id="IPR018271">
    <property type="entry name" value="Ribosomal_uS14_CS"/>
</dbReference>
<dbReference type="InterPro" id="IPR043140">
    <property type="entry name" value="Ribosomal_uS14_sf"/>
</dbReference>
<dbReference type="NCBIfam" id="NF005974">
    <property type="entry name" value="PRK08061.1"/>
    <property type="match status" value="1"/>
</dbReference>
<dbReference type="PANTHER" id="PTHR19836">
    <property type="entry name" value="30S RIBOSOMAL PROTEIN S14"/>
    <property type="match status" value="1"/>
</dbReference>
<dbReference type="PANTHER" id="PTHR19836:SF26">
    <property type="entry name" value="SMALL RIBOSOMAL SUBUNIT PROTEIN US14B"/>
    <property type="match status" value="1"/>
</dbReference>
<dbReference type="Pfam" id="PF00253">
    <property type="entry name" value="Ribosomal_S14"/>
    <property type="match status" value="1"/>
</dbReference>
<dbReference type="SUPFAM" id="SSF57716">
    <property type="entry name" value="Glucocorticoid receptor-like (DNA-binding domain)"/>
    <property type="match status" value="1"/>
</dbReference>
<dbReference type="PROSITE" id="PS00527">
    <property type="entry name" value="RIBOSOMAL_S14"/>
    <property type="match status" value="1"/>
</dbReference>
<gene>
    <name evidence="1" type="primary">rpsZ</name>
    <name evidence="1" type="synonym">rpsN</name>
    <name type="ordered locus">Sez_0069</name>
</gene>
<keyword id="KW-0479">Metal-binding</keyword>
<keyword id="KW-0687">Ribonucleoprotein</keyword>
<keyword id="KW-0689">Ribosomal protein</keyword>
<keyword id="KW-0694">RNA-binding</keyword>
<keyword id="KW-0699">rRNA-binding</keyword>
<keyword id="KW-0862">Zinc</keyword>
<sequence>MAKKSMIAKNKRPAKYSTQAYTRCEKCGRPHSVYRKFKLCRVCFRELAYKGQIPGVVKASW</sequence>
<comment type="function">
    <text evidence="1">Binds 16S rRNA, required for the assembly of 30S particles and may also be responsible for determining the conformation of the 16S rRNA at the A site.</text>
</comment>
<comment type="cofactor">
    <cofactor evidence="1">
        <name>Zn(2+)</name>
        <dbReference type="ChEBI" id="CHEBI:29105"/>
    </cofactor>
    <text evidence="1">Binds 1 zinc ion per subunit.</text>
</comment>
<comment type="subunit">
    <text evidence="1">Part of the 30S ribosomal subunit. Contacts proteins S3 and S10.</text>
</comment>
<comment type="similarity">
    <text evidence="1">Belongs to the universal ribosomal protein uS14 family. Zinc-binding uS14 subfamily.</text>
</comment>
<evidence type="ECO:0000255" key="1">
    <source>
        <dbReference type="HAMAP-Rule" id="MF_01364"/>
    </source>
</evidence>
<evidence type="ECO:0000305" key="2"/>
<reference key="1">
    <citation type="journal article" date="2008" name="PLoS ONE">
        <title>Genome sequence of a lancefield group C Streptococcus zooepidemicus strain causing epidemic nephritis: new information about an old disease.</title>
        <authorList>
            <person name="Beres S.B."/>
            <person name="Sesso R."/>
            <person name="Pinto S.W.L."/>
            <person name="Hoe N.P."/>
            <person name="Porcella S.F."/>
            <person name="Deleo F.R."/>
            <person name="Musser J.M."/>
        </authorList>
    </citation>
    <scope>NUCLEOTIDE SEQUENCE [LARGE SCALE GENOMIC DNA]</scope>
    <source>
        <strain>MGCS10565</strain>
    </source>
</reference>
<proteinExistence type="inferred from homology"/>
<feature type="chain" id="PRO_1000143918" description="Small ribosomal subunit protein uS14B">
    <location>
        <begin position="1"/>
        <end position="61"/>
    </location>
</feature>
<feature type="binding site" evidence="1">
    <location>
        <position position="24"/>
    </location>
    <ligand>
        <name>Zn(2+)</name>
        <dbReference type="ChEBI" id="CHEBI:29105"/>
    </ligand>
</feature>
<feature type="binding site" evidence="1">
    <location>
        <position position="27"/>
    </location>
    <ligand>
        <name>Zn(2+)</name>
        <dbReference type="ChEBI" id="CHEBI:29105"/>
    </ligand>
</feature>
<feature type="binding site" evidence="1">
    <location>
        <position position="40"/>
    </location>
    <ligand>
        <name>Zn(2+)</name>
        <dbReference type="ChEBI" id="CHEBI:29105"/>
    </ligand>
</feature>
<feature type="binding site" evidence="1">
    <location>
        <position position="43"/>
    </location>
    <ligand>
        <name>Zn(2+)</name>
        <dbReference type="ChEBI" id="CHEBI:29105"/>
    </ligand>
</feature>